<name>C86A8_ARATH</name>
<reference key="1">
    <citation type="journal article" date="2001" name="Proc. Natl. Acad. Sci. U.S.A.">
        <title>Functional analysis of the LACERATA gene of Arabidopsis provides evidence for different roles of fatty acid omega -hydroxylation in development.</title>
        <authorList>
            <person name="Wellesen K."/>
            <person name="Durst F."/>
            <person name="Pinot F."/>
            <person name="Benveniste I."/>
            <person name="Nettesheim K."/>
            <person name="Wisman E."/>
            <person name="Steiner-Lange S."/>
            <person name="Saedler H."/>
            <person name="Yephremov A."/>
        </authorList>
    </citation>
    <scope>NUCLEOTIDE SEQUENCE [GENOMIC DNA]</scope>
    <scope>FUNCTION</scope>
    <scope>DISRUPTION PHENOTYPE</scope>
</reference>
<reference key="2">
    <citation type="journal article" date="1999" name="Nature">
        <title>Sequence and analysis of chromosome 2 of the plant Arabidopsis thaliana.</title>
        <authorList>
            <person name="Lin X."/>
            <person name="Kaul S."/>
            <person name="Rounsley S.D."/>
            <person name="Shea T.P."/>
            <person name="Benito M.-I."/>
            <person name="Town C.D."/>
            <person name="Fujii C.Y."/>
            <person name="Mason T.M."/>
            <person name="Bowman C.L."/>
            <person name="Barnstead M.E."/>
            <person name="Feldblyum T.V."/>
            <person name="Buell C.R."/>
            <person name="Ketchum K.A."/>
            <person name="Lee J.J."/>
            <person name="Ronning C.M."/>
            <person name="Koo H.L."/>
            <person name="Moffat K.S."/>
            <person name="Cronin L.A."/>
            <person name="Shen M."/>
            <person name="Pai G."/>
            <person name="Van Aken S."/>
            <person name="Umayam L."/>
            <person name="Tallon L.J."/>
            <person name="Gill J.E."/>
            <person name="Adams M.D."/>
            <person name="Carrera A.J."/>
            <person name="Creasy T.H."/>
            <person name="Goodman H.M."/>
            <person name="Somerville C.R."/>
            <person name="Copenhaver G.P."/>
            <person name="Preuss D."/>
            <person name="Nierman W.C."/>
            <person name="White O."/>
            <person name="Eisen J.A."/>
            <person name="Salzberg S.L."/>
            <person name="Fraser C.M."/>
            <person name="Venter J.C."/>
        </authorList>
    </citation>
    <scope>NUCLEOTIDE SEQUENCE [LARGE SCALE GENOMIC DNA]</scope>
    <source>
        <strain>cv. Columbia</strain>
    </source>
</reference>
<reference key="3">
    <citation type="journal article" date="2017" name="Plant J.">
        <title>Araport11: a complete reannotation of the Arabidopsis thaliana reference genome.</title>
        <authorList>
            <person name="Cheng C.Y."/>
            <person name="Krishnakumar V."/>
            <person name="Chan A.P."/>
            <person name="Thibaud-Nissen F."/>
            <person name="Schobel S."/>
            <person name="Town C.D."/>
        </authorList>
    </citation>
    <scope>GENOME REANNOTATION</scope>
    <source>
        <strain>cv. Columbia</strain>
    </source>
</reference>
<reference key="4">
    <citation type="journal article" date="2003" name="Science">
        <title>Empirical analysis of transcriptional activity in the Arabidopsis genome.</title>
        <authorList>
            <person name="Yamada K."/>
            <person name="Lim J."/>
            <person name="Dale J.M."/>
            <person name="Chen H."/>
            <person name="Shinn P."/>
            <person name="Palm C.J."/>
            <person name="Southwick A.M."/>
            <person name="Wu H.C."/>
            <person name="Kim C.J."/>
            <person name="Nguyen M."/>
            <person name="Pham P.K."/>
            <person name="Cheuk R.F."/>
            <person name="Karlin-Newmann G."/>
            <person name="Liu S.X."/>
            <person name="Lam B."/>
            <person name="Sakano H."/>
            <person name="Wu T."/>
            <person name="Yu G."/>
            <person name="Miranda M."/>
            <person name="Quach H.L."/>
            <person name="Tripp M."/>
            <person name="Chang C.H."/>
            <person name="Lee J.M."/>
            <person name="Toriumi M.J."/>
            <person name="Chan M.M."/>
            <person name="Tang C.C."/>
            <person name="Onodera C.S."/>
            <person name="Deng J.M."/>
            <person name="Akiyama K."/>
            <person name="Ansari Y."/>
            <person name="Arakawa T."/>
            <person name="Banh J."/>
            <person name="Banno F."/>
            <person name="Bowser L."/>
            <person name="Brooks S.Y."/>
            <person name="Carninci P."/>
            <person name="Chao Q."/>
            <person name="Choy N."/>
            <person name="Enju A."/>
            <person name="Goldsmith A.D."/>
            <person name="Gurjal M."/>
            <person name="Hansen N.F."/>
            <person name="Hayashizaki Y."/>
            <person name="Johnson-Hopson C."/>
            <person name="Hsuan V.W."/>
            <person name="Iida K."/>
            <person name="Karnes M."/>
            <person name="Khan S."/>
            <person name="Koesema E."/>
            <person name="Ishida J."/>
            <person name="Jiang P.X."/>
            <person name="Jones T."/>
            <person name="Kawai J."/>
            <person name="Kamiya A."/>
            <person name="Meyers C."/>
            <person name="Nakajima M."/>
            <person name="Narusaka M."/>
            <person name="Seki M."/>
            <person name="Sakurai T."/>
            <person name="Satou M."/>
            <person name="Tamse R."/>
            <person name="Vaysberg M."/>
            <person name="Wallender E.K."/>
            <person name="Wong C."/>
            <person name="Yamamura Y."/>
            <person name="Yuan S."/>
            <person name="Shinozaki K."/>
            <person name="Davis R.W."/>
            <person name="Theologis A."/>
            <person name="Ecker J.R."/>
        </authorList>
    </citation>
    <scope>NUCLEOTIDE SEQUENCE [LARGE SCALE MRNA]</scope>
    <source>
        <strain>cv. Columbia</strain>
    </source>
</reference>
<reference key="5">
    <citation type="journal article" date="2005" name="Plant Physiol.">
        <title>Differential expression and evolution of the Arabidopsis CYP86A subfamily.</title>
        <authorList>
            <person name="Duan H."/>
            <person name="Schuler M.A."/>
        </authorList>
    </citation>
    <scope>FUNCTION</scope>
    <scope>TISSUE SPECIFICITY</scope>
    <scope>INDUCTION</scope>
    <scope>GENE FAMILY</scope>
</reference>
<reference key="6">
    <citation type="journal article" date="2007" name="Proteins">
        <title>Molecular definitions of fatty acid hydroxylases in Arabidopsis thaliana.</title>
        <authorList>
            <person name="Rupasinghe S.G."/>
            <person name="Duan H."/>
            <person name="Schuler M.A."/>
        </authorList>
    </citation>
    <scope>FUNCTION</scope>
</reference>
<organism>
    <name type="scientific">Arabidopsis thaliana</name>
    <name type="common">Mouse-ear cress</name>
    <dbReference type="NCBI Taxonomy" id="3702"/>
    <lineage>
        <taxon>Eukaryota</taxon>
        <taxon>Viridiplantae</taxon>
        <taxon>Streptophyta</taxon>
        <taxon>Embryophyta</taxon>
        <taxon>Tracheophyta</taxon>
        <taxon>Spermatophyta</taxon>
        <taxon>Magnoliopsida</taxon>
        <taxon>eudicotyledons</taxon>
        <taxon>Gunneridae</taxon>
        <taxon>Pentapetalae</taxon>
        <taxon>rosids</taxon>
        <taxon>malvids</taxon>
        <taxon>Brassicales</taxon>
        <taxon>Brassicaceae</taxon>
        <taxon>Camelineae</taxon>
        <taxon>Arabidopsis</taxon>
    </lineage>
</organism>
<accession>O80823</accession>
<dbReference type="EC" id="1.14.14.1"/>
<dbReference type="EMBL" id="AJ301678">
    <property type="protein sequence ID" value="CAC67445.1"/>
    <property type="molecule type" value="Genomic_DNA"/>
</dbReference>
<dbReference type="EMBL" id="AC004665">
    <property type="protein sequence ID" value="AAM14972.1"/>
    <property type="molecule type" value="Genomic_DNA"/>
</dbReference>
<dbReference type="EMBL" id="CP002685">
    <property type="protein sequence ID" value="AEC10625.1"/>
    <property type="molecule type" value="Genomic_DNA"/>
</dbReference>
<dbReference type="EMBL" id="AY064966">
    <property type="protein sequence ID" value="AAL38383.1"/>
    <property type="molecule type" value="mRNA"/>
</dbReference>
<dbReference type="EMBL" id="BT002239">
    <property type="protein sequence ID" value="AAN72250.1"/>
    <property type="molecule type" value="mRNA"/>
</dbReference>
<dbReference type="PIR" id="T02450">
    <property type="entry name" value="T02450"/>
</dbReference>
<dbReference type="RefSeq" id="NP_182121.1">
    <property type="nucleotide sequence ID" value="NM_130160.3"/>
</dbReference>
<dbReference type="SMR" id="O80823"/>
<dbReference type="FunCoup" id="O80823">
    <property type="interactions" value="353"/>
</dbReference>
<dbReference type="STRING" id="3702.O80823"/>
<dbReference type="PaxDb" id="3702-AT2G45970.1"/>
<dbReference type="ProteomicsDB" id="223855"/>
<dbReference type="EnsemblPlants" id="AT2G45970.1">
    <property type="protein sequence ID" value="AT2G45970.1"/>
    <property type="gene ID" value="AT2G45970"/>
</dbReference>
<dbReference type="GeneID" id="819205"/>
<dbReference type="Gramene" id="AT2G45970.1">
    <property type="protein sequence ID" value="AT2G45970.1"/>
    <property type="gene ID" value="AT2G45970"/>
</dbReference>
<dbReference type="KEGG" id="ath:AT2G45970"/>
<dbReference type="Araport" id="AT2G45970"/>
<dbReference type="TAIR" id="AT2G45970">
    <property type="gene designation" value="CYP86A8"/>
</dbReference>
<dbReference type="eggNOG" id="KOG0157">
    <property type="taxonomic scope" value="Eukaryota"/>
</dbReference>
<dbReference type="HOGENOM" id="CLU_001570_27_2_1"/>
<dbReference type="InParanoid" id="O80823"/>
<dbReference type="OMA" id="FWLITQH"/>
<dbReference type="OrthoDB" id="1470350at2759"/>
<dbReference type="PhylomeDB" id="O80823"/>
<dbReference type="BioCyc" id="ARA:AT2G45970-MONOMER"/>
<dbReference type="BioCyc" id="MetaCyc:AT2G45970-MONOMER"/>
<dbReference type="BRENDA" id="1.14.14.80">
    <property type="organism ID" value="399"/>
</dbReference>
<dbReference type="PRO" id="PR:O80823"/>
<dbReference type="Proteomes" id="UP000006548">
    <property type="component" value="Chromosome 2"/>
</dbReference>
<dbReference type="ExpressionAtlas" id="O80823">
    <property type="expression patterns" value="baseline and differential"/>
</dbReference>
<dbReference type="GO" id="GO:0016020">
    <property type="term" value="C:membrane"/>
    <property type="evidence" value="ECO:0007669"/>
    <property type="project" value="UniProtKB-SubCell"/>
</dbReference>
<dbReference type="GO" id="GO:0018685">
    <property type="term" value="F:alkane 1-monooxygenase activity"/>
    <property type="evidence" value="ECO:0000314"/>
    <property type="project" value="TAIR"/>
</dbReference>
<dbReference type="GO" id="GO:0020037">
    <property type="term" value="F:heme binding"/>
    <property type="evidence" value="ECO:0007669"/>
    <property type="project" value="InterPro"/>
</dbReference>
<dbReference type="GO" id="GO:0005506">
    <property type="term" value="F:iron ion binding"/>
    <property type="evidence" value="ECO:0007669"/>
    <property type="project" value="InterPro"/>
</dbReference>
<dbReference type="GO" id="GO:0016712">
    <property type="term" value="F:oxidoreductase activity, acting on paired donors, with incorporation or reduction of molecular oxygen, reduced flavin or flavoprotein as one donor, and incorporation of one atom of oxygen"/>
    <property type="evidence" value="ECO:0007669"/>
    <property type="project" value="UniProtKB-EC"/>
</dbReference>
<dbReference type="GO" id="GO:0006631">
    <property type="term" value="P:fatty acid metabolic process"/>
    <property type="evidence" value="ECO:0000314"/>
    <property type="project" value="TAIR"/>
</dbReference>
<dbReference type="GO" id="GO:0008610">
    <property type="term" value="P:lipid biosynthetic process"/>
    <property type="evidence" value="ECO:0000315"/>
    <property type="project" value="TAIR"/>
</dbReference>
<dbReference type="GO" id="GO:0010214">
    <property type="term" value="P:seed coat development"/>
    <property type="evidence" value="ECO:0000315"/>
    <property type="project" value="TAIR"/>
</dbReference>
<dbReference type="CDD" id="cd11064">
    <property type="entry name" value="CYP86A"/>
    <property type="match status" value="1"/>
</dbReference>
<dbReference type="FunFam" id="1.10.630.10:FF:000044">
    <property type="entry name" value="Cytochrome P450"/>
    <property type="match status" value="1"/>
</dbReference>
<dbReference type="Gene3D" id="1.10.630.10">
    <property type="entry name" value="Cytochrome P450"/>
    <property type="match status" value="1"/>
</dbReference>
<dbReference type="InterPro" id="IPR001128">
    <property type="entry name" value="Cyt_P450"/>
</dbReference>
<dbReference type="InterPro" id="IPR017972">
    <property type="entry name" value="Cyt_P450_CS"/>
</dbReference>
<dbReference type="InterPro" id="IPR002401">
    <property type="entry name" value="Cyt_P450_E_grp-I"/>
</dbReference>
<dbReference type="InterPro" id="IPR036396">
    <property type="entry name" value="Cyt_P450_sf"/>
</dbReference>
<dbReference type="PANTHER" id="PTHR24296">
    <property type="entry name" value="CYTOCHROME P450"/>
    <property type="match status" value="1"/>
</dbReference>
<dbReference type="Pfam" id="PF00067">
    <property type="entry name" value="p450"/>
    <property type="match status" value="1"/>
</dbReference>
<dbReference type="PRINTS" id="PR00463">
    <property type="entry name" value="EP450I"/>
</dbReference>
<dbReference type="PRINTS" id="PR00385">
    <property type="entry name" value="P450"/>
</dbReference>
<dbReference type="SUPFAM" id="SSF48264">
    <property type="entry name" value="Cytochrome P450"/>
    <property type="match status" value="1"/>
</dbReference>
<dbReference type="PROSITE" id="PS00086">
    <property type="entry name" value="CYTOCHROME_P450"/>
    <property type="match status" value="1"/>
</dbReference>
<comment type="function">
    <text evidence="3 4 5">Catalyzes the omega-hydroxylation of various fatty acids (FA). Acts on saturated and unsaturated fatty acids with chain lengths from C12 to C18. May be involved in the biosynthesis of cutin in the epidermis which prevents post-genital organ fusions. Hydroxylated FAs may be important for trichome differentiation, establishment of apical dominance and senescence.</text>
</comment>
<comment type="catalytic activity">
    <reaction>
        <text>an organic molecule + reduced [NADPH--hemoprotein reductase] + O2 = an alcohol + oxidized [NADPH--hemoprotein reductase] + H2O + H(+)</text>
        <dbReference type="Rhea" id="RHEA:17149"/>
        <dbReference type="Rhea" id="RHEA-COMP:11964"/>
        <dbReference type="Rhea" id="RHEA-COMP:11965"/>
        <dbReference type="ChEBI" id="CHEBI:15377"/>
        <dbReference type="ChEBI" id="CHEBI:15378"/>
        <dbReference type="ChEBI" id="CHEBI:15379"/>
        <dbReference type="ChEBI" id="CHEBI:30879"/>
        <dbReference type="ChEBI" id="CHEBI:57618"/>
        <dbReference type="ChEBI" id="CHEBI:58210"/>
        <dbReference type="ChEBI" id="CHEBI:142491"/>
        <dbReference type="EC" id="1.14.14.1"/>
    </reaction>
</comment>
<comment type="cofactor">
    <cofactor evidence="1">
        <name>heme</name>
        <dbReference type="ChEBI" id="CHEBI:30413"/>
    </cofactor>
</comment>
<comment type="subcellular location">
    <subcellularLocation>
        <location evidence="6">Membrane</location>
        <topology evidence="6">Single-pass membrane protein</topology>
    </subcellularLocation>
</comment>
<comment type="tissue specificity">
    <text evidence="4">Expressed in leaves, stems, flowers and siliques. Expressed at low levels in roots.</text>
</comment>
<comment type="induction">
    <text evidence="4">Induced by abscisic acid (ABA) and auxin. Down-regulated by wounding.</text>
</comment>
<comment type="disruption phenotype">
    <text evidence="3">Organ fusion between rosette leaves and in inflorescences.</text>
</comment>
<comment type="similarity">
    <text evidence="6">Belongs to the cytochrome P450 family.</text>
</comment>
<proteinExistence type="evidence at transcript level"/>
<keyword id="KW-0349">Heme</keyword>
<keyword id="KW-0408">Iron</keyword>
<keyword id="KW-0472">Membrane</keyword>
<keyword id="KW-0479">Metal-binding</keyword>
<keyword id="KW-0503">Monooxygenase</keyword>
<keyword id="KW-0560">Oxidoreductase</keyword>
<keyword id="KW-1185">Reference proteome</keyword>
<keyword id="KW-0812">Transmembrane</keyword>
<keyword id="KW-1133">Transmembrane helix</keyword>
<protein>
    <recommendedName>
        <fullName>Cytochrome P450 86A8</fullName>
        <ecNumber>1.14.14.1</ecNumber>
    </recommendedName>
    <alternativeName>
        <fullName>Protein LACERATA</fullName>
    </alternativeName>
</protein>
<feature type="chain" id="PRO_0000424614" description="Cytochrome P450 86A8">
    <location>
        <begin position="1"/>
        <end position="537"/>
    </location>
</feature>
<feature type="transmembrane region" description="Helical" evidence="2">
    <location>
        <begin position="3"/>
        <end position="23"/>
    </location>
</feature>
<feature type="binding site" description="axial binding residue" evidence="1">
    <location>
        <position position="458"/>
    </location>
    <ligand>
        <name>heme</name>
        <dbReference type="ChEBI" id="CHEBI:30413"/>
    </ligand>
    <ligandPart>
        <name>Fe</name>
        <dbReference type="ChEBI" id="CHEBI:18248"/>
    </ligandPart>
</feature>
<sequence>MEISTALMILSAITAYFLWLTFISRCLKGPRVWPILGSLPGLIENCERMHDWISDNLRACSGTYQTCICAIPFLAKKQGLVTVTCDPRNLEHILKNRFDNYPKGPTWQAVFHDLLGQGIFNSDGDTWLFQRKTAALEFTTRTLRQAMARWVNRAIKLRFLPILENARLGSEPIDLQDLLLRLTFDNICGLTFGKDPRTCAPGLPVNTFAVAFDRATEASLQRFILPEILWKFKRWLRLGLEVSLTRSLVQVDNYLSEIITTRKEEMMTQHNNGKHHDDLLSRFIKKKESYSDETLQRVALNFILAGRDTSSVALSWFFWLITQHPAIEDKILREICTVLVETRGDDVALWTDEPLSCEELDRLVFLKAALSETLRLYPSVPEDSKRAVKDDVLPDGTFVPAGSSITYSIYSAGRMKSTWGEDCLEFKPERWISQSDGGRFINHDPFKFVAFNAGPRICLGKDLAYLQMKSIASAVLLRHRLTVVTGHKVEQKMSLTLFMKYGLLVNVHERDLTAIAADLRECKSNVVNDGVGNGVSS</sequence>
<gene>
    <name type="primary">CYP86A8</name>
    <name type="synonym">LCR</name>
    <name type="ordered locus">At2g45970</name>
    <name type="ORF">F4I18.5</name>
</gene>
<evidence type="ECO:0000250" key="1"/>
<evidence type="ECO:0000255" key="2"/>
<evidence type="ECO:0000269" key="3">
    <source>
    </source>
</evidence>
<evidence type="ECO:0000269" key="4">
    <source>
    </source>
</evidence>
<evidence type="ECO:0000269" key="5">
    <source>
    </source>
</evidence>
<evidence type="ECO:0000305" key="6"/>